<keyword id="KW-0134">Cell wall</keyword>
<keyword id="KW-1015">Disulfide bond</keyword>
<keyword id="KW-1185">Reference proteome</keyword>
<keyword id="KW-0964">Secreted</keyword>
<keyword id="KW-0732">Signal</keyword>
<name>HFB27_TRIA4</name>
<accession>A0A2T3YYV2</accession>
<sequence length="142" mass="14139">MKFLTVAIVLAAAASAAPTKEVLPYPPVVAPPPYGGIAPDHNPPFGGGIPPINSGGLPPTNGAYPGGNNRHLCPSGLLYTNPQCCSAGVLGVADLDCKTPSSVPMNGADFERICAADGSKAQCCSVPVAGLALLCQDAIGTN</sequence>
<organism>
    <name type="scientific">Trichoderma asperellum (strain ATCC 204424 / CBS 433.97 / NBRC 101777)</name>
    <dbReference type="NCBI Taxonomy" id="1042311"/>
    <lineage>
        <taxon>Eukaryota</taxon>
        <taxon>Fungi</taxon>
        <taxon>Dikarya</taxon>
        <taxon>Ascomycota</taxon>
        <taxon>Pezizomycotina</taxon>
        <taxon>Sordariomycetes</taxon>
        <taxon>Hypocreomycetidae</taxon>
        <taxon>Hypocreales</taxon>
        <taxon>Hypocreaceae</taxon>
        <taxon>Trichoderma</taxon>
    </lineage>
</organism>
<gene>
    <name evidence="4" type="primary">HFB2-7</name>
    <name type="ORF">M441DRAFT_60885</name>
</gene>
<dbReference type="EMBL" id="KZ679267">
    <property type="protein sequence ID" value="PTB37727.1"/>
    <property type="molecule type" value="Genomic_DNA"/>
</dbReference>
<dbReference type="STRING" id="1042311.A0A2T3YYV2"/>
<dbReference type="OrthoDB" id="4500971at2759"/>
<dbReference type="Proteomes" id="UP000240493">
    <property type="component" value="Unassembled WGS sequence"/>
</dbReference>
<dbReference type="GO" id="GO:0005576">
    <property type="term" value="C:extracellular region"/>
    <property type="evidence" value="ECO:0007669"/>
    <property type="project" value="UniProtKB-KW"/>
</dbReference>
<dbReference type="CDD" id="cd23508">
    <property type="entry name" value="hydrophobin_II"/>
    <property type="match status" value="1"/>
</dbReference>
<dbReference type="Gene3D" id="3.20.120.10">
    <property type="entry name" value="Hydrophobin"/>
    <property type="match status" value="1"/>
</dbReference>
<dbReference type="InterPro" id="IPR010636">
    <property type="entry name" value="Cerato-ulmin_hydrophobin"/>
</dbReference>
<dbReference type="InterPro" id="IPR036686">
    <property type="entry name" value="Hydrophobin_sf"/>
</dbReference>
<dbReference type="PANTHER" id="PTHR42341">
    <property type="entry name" value="HYDROPHOBIN"/>
    <property type="match status" value="1"/>
</dbReference>
<dbReference type="PANTHER" id="PTHR42341:SF1">
    <property type="entry name" value="HYDROPHOBIN"/>
    <property type="match status" value="1"/>
</dbReference>
<dbReference type="Pfam" id="PF06766">
    <property type="entry name" value="Hydrophobin_2"/>
    <property type="match status" value="1"/>
</dbReference>
<dbReference type="SUPFAM" id="SSF101751">
    <property type="entry name" value="Hydrophobin II, HfbII"/>
    <property type="match status" value="1"/>
</dbReference>
<comment type="function">
    <text evidence="5">Aerial growth, conidiation, and dispersal of filamentous fungi in the environment rely upon a capability of their secreting small amphipathic proteins called hydrophobins (HPBs) with low sequence identity. Class I can self-assemble into an outermost layer of rodlet bundles on aerial cell surfaces, conferring cellular hydrophobicity that supports fungal growth, development and dispersal; whereas Class II form highly ordered films at water-air interfaces through intermolecular interactions but contribute nothing to the rodlet structure.</text>
</comment>
<comment type="subunit">
    <text evidence="1">Homodimer (By similarity). Homodimers further self-assemble to form highly ordered films at water-air interfaces through intermolecular interactions (By similarity).</text>
</comment>
<comment type="subcellular location">
    <subcellularLocation>
        <location evidence="1">Secreted</location>
    </subcellularLocation>
    <subcellularLocation>
        <location evidence="1">Secreted</location>
        <location evidence="1">Cell wall</location>
    </subcellularLocation>
</comment>
<comment type="induction">
    <text evidence="3">Expression is highly induced in the presence of root and stem powder of Shanxin poplar and under nitrogen or carbon starvation conditions.</text>
</comment>
<comment type="similarity">
    <text evidence="5">Belongs to the cerato-ulmin hydrophobin family.</text>
</comment>
<evidence type="ECO:0000250" key="1">
    <source>
        <dbReference type="UniProtKB" id="P79073"/>
    </source>
</evidence>
<evidence type="ECO:0000255" key="2"/>
<evidence type="ECO:0000269" key="3">
    <source>
    </source>
</evidence>
<evidence type="ECO:0000303" key="4">
    <source>
    </source>
</evidence>
<evidence type="ECO:0000305" key="5"/>
<protein>
    <recommendedName>
        <fullName evidence="4">Class II hydrophobin 7</fullName>
    </recommendedName>
</protein>
<feature type="signal peptide" evidence="2">
    <location>
        <begin position="1"/>
        <end position="16"/>
    </location>
</feature>
<feature type="chain" id="PRO_5015747378" description="Class II hydrophobin 7">
    <location>
        <begin position="17"/>
        <end position="142"/>
    </location>
</feature>
<feature type="disulfide bond" evidence="1">
    <location>
        <begin position="73"/>
        <end position="123"/>
    </location>
</feature>
<feature type="disulfide bond" evidence="1">
    <location>
        <begin position="84"/>
        <end position="114"/>
    </location>
</feature>
<feature type="disulfide bond" evidence="1">
    <location>
        <begin position="85"/>
        <end position="97"/>
    </location>
</feature>
<feature type="disulfide bond" evidence="1">
    <location>
        <begin position="124"/>
        <end position="135"/>
    </location>
</feature>
<reference key="1">
    <citation type="submission" date="2016-07" db="EMBL/GenBank/DDBJ databases">
        <title>Multiple horizontal gene transfer events from other fungi enriched the ability of initially mycotrophic Trichoderma (Ascomycota) to feed on dead plant biomass.</title>
        <authorList>
            <consortium name="DOE Joint Genome Institute"/>
            <person name="Aerts A."/>
            <person name="Atanasova L."/>
            <person name="Chenthamara K."/>
            <person name="Zhang J."/>
            <person name="Grujic M."/>
            <person name="Henrissat B."/>
            <person name="Kuo A."/>
            <person name="Salamov A."/>
            <person name="Lipzen A."/>
            <person name="Labutti K."/>
            <person name="Barry K."/>
            <person name="Miao Y."/>
            <person name="Rahimi M.J."/>
            <person name="Shen Q."/>
            <person name="Grigoriev I.V."/>
            <person name="Kubicek C.P."/>
            <person name="Druzhinina I.S."/>
        </authorList>
    </citation>
    <scope>NUCLEOTIDE SEQUENCE [LARGE SCALE GENOMIC DNA]</scope>
    <source>
        <strain>ATCC 204424 / CBS 433.97 / NBRC 101777</strain>
    </source>
</reference>
<reference key="2">
    <citation type="journal article" date="2015" name="Microbiol. Res.">
        <title>Functional analysis of the class II hydrophobin gene HFB2-6 from the biocontrol agent Trichoderma asperellum ACCC30536.</title>
        <authorList>
            <person name="Huang Y."/>
            <person name="Mijiti G."/>
            <person name="Wang Z."/>
            <person name="Yu W."/>
            <person name="Fan H."/>
            <person name="Zhang R."/>
            <person name="Liu Z."/>
        </authorList>
    </citation>
    <scope>INDUCTION</scope>
</reference>
<proteinExistence type="evidence at transcript level"/>